<proteinExistence type="inferred from homology"/>
<organism>
    <name type="scientific">Bacillus anthracis (strain CDC 684 / NRRL 3495)</name>
    <dbReference type="NCBI Taxonomy" id="568206"/>
    <lineage>
        <taxon>Bacteria</taxon>
        <taxon>Bacillati</taxon>
        <taxon>Bacillota</taxon>
        <taxon>Bacilli</taxon>
        <taxon>Bacillales</taxon>
        <taxon>Bacillaceae</taxon>
        <taxon>Bacillus</taxon>
        <taxon>Bacillus cereus group</taxon>
    </lineage>
</organism>
<accession>C3L5R5</accession>
<reference key="1">
    <citation type="submission" date="2008-10" db="EMBL/GenBank/DDBJ databases">
        <title>Genome sequence of Bacillus anthracis str. CDC 684.</title>
        <authorList>
            <person name="Dodson R.J."/>
            <person name="Munk A.C."/>
            <person name="Brettin T."/>
            <person name="Bruce D."/>
            <person name="Detter C."/>
            <person name="Tapia R."/>
            <person name="Han C."/>
            <person name="Sutton G."/>
            <person name="Sims D."/>
        </authorList>
    </citation>
    <scope>NUCLEOTIDE SEQUENCE [LARGE SCALE GENOMIC DNA]</scope>
    <source>
        <strain>CDC 684 / NRRL 3495</strain>
    </source>
</reference>
<evidence type="ECO:0000255" key="1">
    <source>
        <dbReference type="HAMAP-Rule" id="MF_00735"/>
    </source>
</evidence>
<comment type="function">
    <text evidence="1">Methylates ribosomal protein L11.</text>
</comment>
<comment type="catalytic activity">
    <reaction evidence="1">
        <text>L-lysyl-[protein] + 3 S-adenosyl-L-methionine = N(6),N(6),N(6)-trimethyl-L-lysyl-[protein] + 3 S-adenosyl-L-homocysteine + 3 H(+)</text>
        <dbReference type="Rhea" id="RHEA:54192"/>
        <dbReference type="Rhea" id="RHEA-COMP:9752"/>
        <dbReference type="Rhea" id="RHEA-COMP:13826"/>
        <dbReference type="ChEBI" id="CHEBI:15378"/>
        <dbReference type="ChEBI" id="CHEBI:29969"/>
        <dbReference type="ChEBI" id="CHEBI:57856"/>
        <dbReference type="ChEBI" id="CHEBI:59789"/>
        <dbReference type="ChEBI" id="CHEBI:61961"/>
    </reaction>
</comment>
<comment type="subcellular location">
    <subcellularLocation>
        <location evidence="1">Cytoplasm</location>
    </subcellularLocation>
</comment>
<comment type="similarity">
    <text evidence="1">Belongs to the methyltransferase superfamily. PrmA family.</text>
</comment>
<feature type="chain" id="PRO_1000192578" description="Ribosomal protein L11 methyltransferase">
    <location>
        <begin position="1"/>
        <end position="312"/>
    </location>
</feature>
<feature type="binding site" evidence="1">
    <location>
        <position position="162"/>
    </location>
    <ligand>
        <name>S-adenosyl-L-methionine</name>
        <dbReference type="ChEBI" id="CHEBI:59789"/>
    </ligand>
</feature>
<feature type="binding site" evidence="1">
    <location>
        <position position="183"/>
    </location>
    <ligand>
        <name>S-adenosyl-L-methionine</name>
        <dbReference type="ChEBI" id="CHEBI:59789"/>
    </ligand>
</feature>
<feature type="binding site" evidence="1">
    <location>
        <position position="205"/>
    </location>
    <ligand>
        <name>S-adenosyl-L-methionine</name>
        <dbReference type="ChEBI" id="CHEBI:59789"/>
    </ligand>
</feature>
<feature type="binding site" evidence="1">
    <location>
        <position position="248"/>
    </location>
    <ligand>
        <name>S-adenosyl-L-methionine</name>
        <dbReference type="ChEBI" id="CHEBI:59789"/>
    </ligand>
</feature>
<name>PRMA_BACAC</name>
<dbReference type="EC" id="2.1.1.-" evidence="1"/>
<dbReference type="EMBL" id="CP001215">
    <property type="protein sequence ID" value="ACP16985.1"/>
    <property type="molecule type" value="Genomic_DNA"/>
</dbReference>
<dbReference type="RefSeq" id="WP_000872105.1">
    <property type="nucleotide sequence ID" value="NC_012581.1"/>
</dbReference>
<dbReference type="SMR" id="C3L5R5"/>
<dbReference type="GeneID" id="45024189"/>
<dbReference type="KEGG" id="bah:BAMEG_4574"/>
<dbReference type="HOGENOM" id="CLU_049382_0_1_9"/>
<dbReference type="GO" id="GO:0005737">
    <property type="term" value="C:cytoplasm"/>
    <property type="evidence" value="ECO:0007669"/>
    <property type="project" value="UniProtKB-SubCell"/>
</dbReference>
<dbReference type="GO" id="GO:0016279">
    <property type="term" value="F:protein-lysine N-methyltransferase activity"/>
    <property type="evidence" value="ECO:0007669"/>
    <property type="project" value="RHEA"/>
</dbReference>
<dbReference type="GO" id="GO:0032259">
    <property type="term" value="P:methylation"/>
    <property type="evidence" value="ECO:0007669"/>
    <property type="project" value="UniProtKB-KW"/>
</dbReference>
<dbReference type="CDD" id="cd02440">
    <property type="entry name" value="AdoMet_MTases"/>
    <property type="match status" value="1"/>
</dbReference>
<dbReference type="Gene3D" id="3.40.50.150">
    <property type="entry name" value="Vaccinia Virus protein VP39"/>
    <property type="match status" value="1"/>
</dbReference>
<dbReference type="HAMAP" id="MF_00735">
    <property type="entry name" value="Methyltr_PrmA"/>
    <property type="match status" value="1"/>
</dbReference>
<dbReference type="InterPro" id="IPR050078">
    <property type="entry name" value="Ribosomal_L11_MeTrfase_PrmA"/>
</dbReference>
<dbReference type="InterPro" id="IPR004498">
    <property type="entry name" value="Ribosomal_PrmA_MeTrfase"/>
</dbReference>
<dbReference type="InterPro" id="IPR029063">
    <property type="entry name" value="SAM-dependent_MTases_sf"/>
</dbReference>
<dbReference type="NCBIfam" id="TIGR00406">
    <property type="entry name" value="prmA"/>
    <property type="match status" value="1"/>
</dbReference>
<dbReference type="PANTHER" id="PTHR43648">
    <property type="entry name" value="ELECTRON TRANSFER FLAVOPROTEIN BETA SUBUNIT LYSINE METHYLTRANSFERASE"/>
    <property type="match status" value="1"/>
</dbReference>
<dbReference type="PANTHER" id="PTHR43648:SF1">
    <property type="entry name" value="ELECTRON TRANSFER FLAVOPROTEIN BETA SUBUNIT LYSINE METHYLTRANSFERASE"/>
    <property type="match status" value="1"/>
</dbReference>
<dbReference type="Pfam" id="PF06325">
    <property type="entry name" value="PrmA"/>
    <property type="match status" value="1"/>
</dbReference>
<dbReference type="PIRSF" id="PIRSF000401">
    <property type="entry name" value="RPL11_MTase"/>
    <property type="match status" value="1"/>
</dbReference>
<dbReference type="SUPFAM" id="SSF53335">
    <property type="entry name" value="S-adenosyl-L-methionine-dependent methyltransferases"/>
    <property type="match status" value="1"/>
</dbReference>
<sequence length="312" mass="33715">MKWSEISIHTTEEAVEAVSHILHEAGASGVAIEDPAELTKEREQQYGEIYALNPDEYPAEGVLIKAYFPQTDSLHETIAGVKSSIDVLPSYDIEIGTGNITVNEVNEEDWATAWKKYYHPVQISDTFTIVPTWEEYTPSSPEEKIIELDPGMAFGTGTHPTTTMCIRALEKTVQPGDTIIDVGTGSGVLSIAAAKLGASSVQAYDLDPVAVESAEMNVRLNKTDDVVSVGQNSLLEGIEGPVDLIVANLLAEIILLFPEDAARVVKSGGLFITSGIIAAKEKVISEALEKAGFTIEEVLRMEDWVAIIARNA</sequence>
<protein>
    <recommendedName>
        <fullName evidence="1">Ribosomal protein L11 methyltransferase</fullName>
        <shortName evidence="1">L11 Mtase</shortName>
        <ecNumber evidence="1">2.1.1.-</ecNumber>
    </recommendedName>
</protein>
<keyword id="KW-0963">Cytoplasm</keyword>
<keyword id="KW-0489">Methyltransferase</keyword>
<keyword id="KW-0949">S-adenosyl-L-methionine</keyword>
<keyword id="KW-0808">Transferase</keyword>
<gene>
    <name evidence="1" type="primary">prmA</name>
    <name type="ordered locus">BAMEG_4574</name>
</gene>